<keyword id="KW-0143">Chaperone</keyword>
<keyword id="KW-0963">Cytoplasm</keyword>
<name>CH10_RICCK</name>
<proteinExistence type="inferred from homology"/>
<sequence length="95" mass="10511">MSFKPLHDRIAIKPIEHEEKTKGGIIIPDTAKEKPMQGIITAVGTGTRNEKGEVYPLELKVGDKVLYGKWAGTEIEIKGEKLIVMKENDVLGIIN</sequence>
<evidence type="ECO:0000255" key="1">
    <source>
        <dbReference type="HAMAP-Rule" id="MF_00580"/>
    </source>
</evidence>
<dbReference type="EMBL" id="CP000409">
    <property type="protein sequence ID" value="ABV73268.1"/>
    <property type="molecule type" value="Genomic_DNA"/>
</dbReference>
<dbReference type="RefSeq" id="WP_012148467.1">
    <property type="nucleotide sequence ID" value="NC_009879.1"/>
</dbReference>
<dbReference type="SMR" id="A8EY35"/>
<dbReference type="STRING" id="293613.A1E_01615"/>
<dbReference type="KEGG" id="rcm:A1E_01615"/>
<dbReference type="eggNOG" id="COG0234">
    <property type="taxonomic scope" value="Bacteria"/>
</dbReference>
<dbReference type="HOGENOM" id="CLU_132825_1_0_5"/>
<dbReference type="Proteomes" id="UP000007056">
    <property type="component" value="Chromosome"/>
</dbReference>
<dbReference type="GO" id="GO:0005737">
    <property type="term" value="C:cytoplasm"/>
    <property type="evidence" value="ECO:0007669"/>
    <property type="project" value="UniProtKB-SubCell"/>
</dbReference>
<dbReference type="GO" id="GO:0005524">
    <property type="term" value="F:ATP binding"/>
    <property type="evidence" value="ECO:0007669"/>
    <property type="project" value="InterPro"/>
</dbReference>
<dbReference type="GO" id="GO:0046872">
    <property type="term" value="F:metal ion binding"/>
    <property type="evidence" value="ECO:0007669"/>
    <property type="project" value="TreeGrafter"/>
</dbReference>
<dbReference type="GO" id="GO:0044183">
    <property type="term" value="F:protein folding chaperone"/>
    <property type="evidence" value="ECO:0007669"/>
    <property type="project" value="InterPro"/>
</dbReference>
<dbReference type="GO" id="GO:0051087">
    <property type="term" value="F:protein-folding chaperone binding"/>
    <property type="evidence" value="ECO:0007669"/>
    <property type="project" value="TreeGrafter"/>
</dbReference>
<dbReference type="GO" id="GO:0051082">
    <property type="term" value="F:unfolded protein binding"/>
    <property type="evidence" value="ECO:0007669"/>
    <property type="project" value="TreeGrafter"/>
</dbReference>
<dbReference type="GO" id="GO:0051085">
    <property type="term" value="P:chaperone cofactor-dependent protein refolding"/>
    <property type="evidence" value="ECO:0007669"/>
    <property type="project" value="TreeGrafter"/>
</dbReference>
<dbReference type="CDD" id="cd00320">
    <property type="entry name" value="cpn10"/>
    <property type="match status" value="1"/>
</dbReference>
<dbReference type="FunFam" id="2.30.33.40:FF:000001">
    <property type="entry name" value="10 kDa chaperonin"/>
    <property type="match status" value="1"/>
</dbReference>
<dbReference type="Gene3D" id="2.30.33.40">
    <property type="entry name" value="GroES chaperonin"/>
    <property type="match status" value="1"/>
</dbReference>
<dbReference type="HAMAP" id="MF_00580">
    <property type="entry name" value="CH10"/>
    <property type="match status" value="1"/>
</dbReference>
<dbReference type="InterPro" id="IPR020818">
    <property type="entry name" value="Chaperonin_GroES"/>
</dbReference>
<dbReference type="InterPro" id="IPR037124">
    <property type="entry name" value="Chaperonin_GroES_sf"/>
</dbReference>
<dbReference type="InterPro" id="IPR018369">
    <property type="entry name" value="Chaprnonin_Cpn10_CS"/>
</dbReference>
<dbReference type="InterPro" id="IPR011032">
    <property type="entry name" value="GroES-like_sf"/>
</dbReference>
<dbReference type="NCBIfam" id="NF001527">
    <property type="entry name" value="PRK00364.1-2"/>
    <property type="match status" value="1"/>
</dbReference>
<dbReference type="NCBIfam" id="NF001529">
    <property type="entry name" value="PRK00364.1-5"/>
    <property type="match status" value="1"/>
</dbReference>
<dbReference type="NCBIfam" id="NF001531">
    <property type="entry name" value="PRK00364.2-2"/>
    <property type="match status" value="1"/>
</dbReference>
<dbReference type="NCBIfam" id="NF001533">
    <property type="entry name" value="PRK00364.2-4"/>
    <property type="match status" value="1"/>
</dbReference>
<dbReference type="PANTHER" id="PTHR10772">
    <property type="entry name" value="10 KDA HEAT SHOCK PROTEIN"/>
    <property type="match status" value="1"/>
</dbReference>
<dbReference type="PANTHER" id="PTHR10772:SF63">
    <property type="entry name" value="20 KDA CHAPERONIN, CHLOROPLASTIC"/>
    <property type="match status" value="1"/>
</dbReference>
<dbReference type="Pfam" id="PF00166">
    <property type="entry name" value="Cpn10"/>
    <property type="match status" value="1"/>
</dbReference>
<dbReference type="PRINTS" id="PR00297">
    <property type="entry name" value="CHAPERONIN10"/>
</dbReference>
<dbReference type="SMART" id="SM00883">
    <property type="entry name" value="Cpn10"/>
    <property type="match status" value="1"/>
</dbReference>
<dbReference type="SUPFAM" id="SSF50129">
    <property type="entry name" value="GroES-like"/>
    <property type="match status" value="1"/>
</dbReference>
<dbReference type="PROSITE" id="PS00681">
    <property type="entry name" value="CHAPERONINS_CPN10"/>
    <property type="match status" value="1"/>
</dbReference>
<gene>
    <name evidence="1" type="primary">groES</name>
    <name evidence="1" type="synonym">groS</name>
    <name type="ordered locus">A1E_01615</name>
</gene>
<reference key="1">
    <citation type="submission" date="2007-09" db="EMBL/GenBank/DDBJ databases">
        <title>Complete genome sequence of Rickettsia canadensis.</title>
        <authorList>
            <person name="Madan A."/>
            <person name="Fahey J."/>
            <person name="Helton E."/>
            <person name="Ketteman M."/>
            <person name="Madan A."/>
            <person name="Rodrigues S."/>
            <person name="Sanchez A."/>
            <person name="Whiting M."/>
            <person name="Dasch G."/>
            <person name="Eremeeva M."/>
        </authorList>
    </citation>
    <scope>NUCLEOTIDE SEQUENCE [LARGE SCALE GENOMIC DNA]</scope>
    <source>
        <strain>McKiel</strain>
    </source>
</reference>
<comment type="function">
    <text evidence="1">Together with the chaperonin GroEL, plays an essential role in assisting protein folding. The GroEL-GroES system forms a nano-cage that allows encapsulation of the non-native substrate proteins and provides a physical environment optimized to promote and accelerate protein folding. GroES binds to the apical surface of the GroEL ring, thereby capping the opening of the GroEL channel.</text>
</comment>
<comment type="subunit">
    <text evidence="1">Heptamer of 7 subunits arranged in a ring. Interacts with the chaperonin GroEL.</text>
</comment>
<comment type="subcellular location">
    <subcellularLocation>
        <location evidence="1">Cytoplasm</location>
    </subcellularLocation>
</comment>
<comment type="similarity">
    <text evidence="1">Belongs to the GroES chaperonin family.</text>
</comment>
<feature type="chain" id="PRO_1000025354" description="Co-chaperonin GroES">
    <location>
        <begin position="1"/>
        <end position="95"/>
    </location>
</feature>
<accession>A8EY35</accession>
<organism>
    <name type="scientific">Rickettsia canadensis (strain McKiel)</name>
    <dbReference type="NCBI Taxonomy" id="293613"/>
    <lineage>
        <taxon>Bacteria</taxon>
        <taxon>Pseudomonadati</taxon>
        <taxon>Pseudomonadota</taxon>
        <taxon>Alphaproteobacteria</taxon>
        <taxon>Rickettsiales</taxon>
        <taxon>Rickettsiaceae</taxon>
        <taxon>Rickettsieae</taxon>
        <taxon>Rickettsia</taxon>
        <taxon>belli group</taxon>
    </lineage>
</organism>
<protein>
    <recommendedName>
        <fullName evidence="1">Co-chaperonin GroES</fullName>
    </recommendedName>
    <alternativeName>
        <fullName evidence="1">10 kDa chaperonin</fullName>
    </alternativeName>
    <alternativeName>
        <fullName evidence="1">Chaperonin-10</fullName>
        <shortName evidence="1">Cpn10</shortName>
    </alternativeName>
</protein>